<keyword id="KW-0067">ATP-binding</keyword>
<keyword id="KW-0963">Cytoplasm</keyword>
<keyword id="KW-0418">Kinase</keyword>
<keyword id="KW-0547">Nucleotide-binding</keyword>
<keyword id="KW-0808">Transferase</keyword>
<gene>
    <name evidence="1" type="primary">cmk</name>
    <name type="ordered locus">NWMN_1386</name>
</gene>
<name>KCY_STAAE</name>
<evidence type="ECO:0000255" key="1">
    <source>
        <dbReference type="HAMAP-Rule" id="MF_00238"/>
    </source>
</evidence>
<feature type="chain" id="PRO_1000071822" description="Cytidylate kinase">
    <location>
        <begin position="1"/>
        <end position="219"/>
    </location>
</feature>
<feature type="binding site" evidence="1">
    <location>
        <begin position="10"/>
        <end position="18"/>
    </location>
    <ligand>
        <name>ATP</name>
        <dbReference type="ChEBI" id="CHEBI:30616"/>
    </ligand>
</feature>
<reference key="1">
    <citation type="journal article" date="2008" name="J. Bacteriol.">
        <title>Genome sequence of Staphylococcus aureus strain Newman and comparative analysis of staphylococcal genomes: polymorphism and evolution of two major pathogenicity islands.</title>
        <authorList>
            <person name="Baba T."/>
            <person name="Bae T."/>
            <person name="Schneewind O."/>
            <person name="Takeuchi F."/>
            <person name="Hiramatsu K."/>
        </authorList>
    </citation>
    <scope>NUCLEOTIDE SEQUENCE [LARGE SCALE GENOMIC DNA]</scope>
    <source>
        <strain>Newman</strain>
    </source>
</reference>
<protein>
    <recommendedName>
        <fullName evidence="1">Cytidylate kinase</fullName>
        <shortName evidence="1">CK</shortName>
        <ecNumber evidence="1">2.7.4.25</ecNumber>
    </recommendedName>
    <alternativeName>
        <fullName evidence="1">Cytidine monophosphate kinase</fullName>
        <shortName evidence="1">CMP kinase</shortName>
    </alternativeName>
</protein>
<sequence>MKAINIALDGPAAAGKSTIAKRVASELSMIYVDTGAMYRALTYKYLKLNKTEDFAKLVDQTTLDLTYKADKGQCVILDNEDVTDFLRNNDVTQHVSYVASKEPVRSFAVKKQKELAAEKGIVMDGRDIGTVVLPDADLKVYMIASVEERAERRYKDNQLRGIESNFEDLKRDIEARDQYDMNREISPLRKADDAVTLDTTGKSIEEVTDEILAMVSQIK</sequence>
<dbReference type="EC" id="2.7.4.25" evidence="1"/>
<dbReference type="EMBL" id="AP009351">
    <property type="protein sequence ID" value="BAF67658.1"/>
    <property type="molecule type" value="Genomic_DNA"/>
</dbReference>
<dbReference type="RefSeq" id="WP_000644391.1">
    <property type="nucleotide sequence ID" value="NZ_JBBIAE010000001.1"/>
</dbReference>
<dbReference type="SMR" id="A6QH26"/>
<dbReference type="KEGG" id="sae:NWMN_1386"/>
<dbReference type="HOGENOM" id="CLU_079959_0_2_9"/>
<dbReference type="Proteomes" id="UP000006386">
    <property type="component" value="Chromosome"/>
</dbReference>
<dbReference type="GO" id="GO:0005829">
    <property type="term" value="C:cytosol"/>
    <property type="evidence" value="ECO:0007669"/>
    <property type="project" value="TreeGrafter"/>
</dbReference>
<dbReference type="GO" id="GO:0005524">
    <property type="term" value="F:ATP binding"/>
    <property type="evidence" value="ECO:0007669"/>
    <property type="project" value="UniProtKB-UniRule"/>
</dbReference>
<dbReference type="GO" id="GO:0036430">
    <property type="term" value="F:CMP kinase activity"/>
    <property type="evidence" value="ECO:0007669"/>
    <property type="project" value="RHEA"/>
</dbReference>
<dbReference type="GO" id="GO:0036431">
    <property type="term" value="F:dCMP kinase activity"/>
    <property type="evidence" value="ECO:0007669"/>
    <property type="project" value="RHEA"/>
</dbReference>
<dbReference type="GO" id="GO:0015949">
    <property type="term" value="P:nucleobase-containing small molecule interconversion"/>
    <property type="evidence" value="ECO:0007669"/>
    <property type="project" value="TreeGrafter"/>
</dbReference>
<dbReference type="GO" id="GO:0006220">
    <property type="term" value="P:pyrimidine nucleotide metabolic process"/>
    <property type="evidence" value="ECO:0007669"/>
    <property type="project" value="UniProtKB-UniRule"/>
</dbReference>
<dbReference type="CDD" id="cd02020">
    <property type="entry name" value="CMPK"/>
    <property type="match status" value="1"/>
</dbReference>
<dbReference type="Gene3D" id="3.40.50.300">
    <property type="entry name" value="P-loop containing nucleotide triphosphate hydrolases"/>
    <property type="match status" value="1"/>
</dbReference>
<dbReference type="HAMAP" id="MF_00238">
    <property type="entry name" value="Cytidyl_kinase_type1"/>
    <property type="match status" value="1"/>
</dbReference>
<dbReference type="InterPro" id="IPR003136">
    <property type="entry name" value="Cytidylate_kin"/>
</dbReference>
<dbReference type="InterPro" id="IPR011994">
    <property type="entry name" value="Cytidylate_kinase_dom"/>
</dbReference>
<dbReference type="InterPro" id="IPR027417">
    <property type="entry name" value="P-loop_NTPase"/>
</dbReference>
<dbReference type="NCBIfam" id="TIGR00017">
    <property type="entry name" value="cmk"/>
    <property type="match status" value="1"/>
</dbReference>
<dbReference type="PANTHER" id="PTHR21299:SF2">
    <property type="entry name" value="CYTIDYLATE KINASE"/>
    <property type="match status" value="1"/>
</dbReference>
<dbReference type="PANTHER" id="PTHR21299">
    <property type="entry name" value="CYTIDYLATE KINASE/PANTOATE-BETA-ALANINE LIGASE"/>
    <property type="match status" value="1"/>
</dbReference>
<dbReference type="Pfam" id="PF02224">
    <property type="entry name" value="Cytidylate_kin"/>
    <property type="match status" value="1"/>
</dbReference>
<dbReference type="SUPFAM" id="SSF52540">
    <property type="entry name" value="P-loop containing nucleoside triphosphate hydrolases"/>
    <property type="match status" value="1"/>
</dbReference>
<accession>A6QH26</accession>
<comment type="catalytic activity">
    <reaction evidence="1">
        <text>CMP + ATP = CDP + ADP</text>
        <dbReference type="Rhea" id="RHEA:11600"/>
        <dbReference type="ChEBI" id="CHEBI:30616"/>
        <dbReference type="ChEBI" id="CHEBI:58069"/>
        <dbReference type="ChEBI" id="CHEBI:60377"/>
        <dbReference type="ChEBI" id="CHEBI:456216"/>
        <dbReference type="EC" id="2.7.4.25"/>
    </reaction>
</comment>
<comment type="catalytic activity">
    <reaction evidence="1">
        <text>dCMP + ATP = dCDP + ADP</text>
        <dbReference type="Rhea" id="RHEA:25094"/>
        <dbReference type="ChEBI" id="CHEBI:30616"/>
        <dbReference type="ChEBI" id="CHEBI:57566"/>
        <dbReference type="ChEBI" id="CHEBI:58593"/>
        <dbReference type="ChEBI" id="CHEBI:456216"/>
        <dbReference type="EC" id="2.7.4.25"/>
    </reaction>
</comment>
<comment type="subcellular location">
    <subcellularLocation>
        <location evidence="1">Cytoplasm</location>
    </subcellularLocation>
</comment>
<comment type="similarity">
    <text evidence="1">Belongs to the cytidylate kinase family. Type 1 subfamily.</text>
</comment>
<proteinExistence type="inferred from homology"/>
<organism>
    <name type="scientific">Staphylococcus aureus (strain Newman)</name>
    <dbReference type="NCBI Taxonomy" id="426430"/>
    <lineage>
        <taxon>Bacteria</taxon>
        <taxon>Bacillati</taxon>
        <taxon>Bacillota</taxon>
        <taxon>Bacilli</taxon>
        <taxon>Bacillales</taxon>
        <taxon>Staphylococcaceae</taxon>
        <taxon>Staphylococcus</taxon>
    </lineage>
</organism>